<accession>Q84HF5</accession>
<gene>
    <name evidence="1" type="primary">kmo</name>
    <name type="synonym">qbsG</name>
</gene>
<protein>
    <recommendedName>
        <fullName evidence="1">Kynurenine 3-monooxygenase</fullName>
        <shortName>PfKMO</shortName>
        <ecNumber evidence="1">1.14.13.9</ecNumber>
    </recommendedName>
    <alternativeName>
        <fullName evidence="1">Kynurenine 3-hydroxylase</fullName>
    </alternativeName>
</protein>
<keyword id="KW-0002">3D-structure</keyword>
<keyword id="KW-0274">FAD</keyword>
<keyword id="KW-0285">Flavoprotein</keyword>
<keyword id="KW-0503">Monooxygenase</keyword>
<keyword id="KW-0521">NADP</keyword>
<keyword id="KW-0560">Oxidoreductase</keyword>
<keyword id="KW-0662">Pyridine nucleotide biosynthesis</keyword>
<name>KMO_PSEFL</name>
<feature type="chain" id="PRO_0000361942" description="Kynurenine 3-monooxygenase">
    <location>
        <begin position="1"/>
        <end position="461"/>
    </location>
</feature>
<feature type="binding site" evidence="4 5 6 7 8 9 10 11 12 13 14 15 16 17 18 19 20 21 22 23 24">
    <location>
        <begin position="17"/>
        <end position="18"/>
    </location>
    <ligand>
        <name>FAD</name>
        <dbReference type="ChEBI" id="CHEBI:57692"/>
    </ligand>
</feature>
<feature type="binding site" evidence="4 5 6 7 8 9 10 11 12 13 14 15 16 17 18 19 20 21 22 23 24">
    <location>
        <begin position="37"/>
        <end position="39"/>
    </location>
    <ligand>
        <name>FAD</name>
        <dbReference type="ChEBI" id="CHEBI:57692"/>
    </ligand>
</feature>
<feature type="binding site" evidence="4 5 6 7 8 9 10 11 12 13 14 15 16 17 18 19 20 21 22 23 24">
    <location>
        <position position="56"/>
    </location>
    <ligand>
        <name>FAD</name>
        <dbReference type="ChEBI" id="CHEBI:57692"/>
    </ligand>
</feature>
<feature type="binding site" evidence="7 22 23">
    <location>
        <position position="84"/>
    </location>
    <ligand>
        <name>L-kynurenine</name>
        <dbReference type="ChEBI" id="CHEBI:57959"/>
    </ligand>
</feature>
<feature type="binding site" evidence="7 23">
    <location>
        <position position="98"/>
    </location>
    <ligand>
        <name>L-kynurenine</name>
        <dbReference type="ChEBI" id="CHEBI:57959"/>
    </ligand>
</feature>
<feature type="binding site" evidence="4 5 6 7 8 9 10 11 12 13 14 15 16 17 18 19 20 21 22 23 24">
    <location>
        <position position="111"/>
    </location>
    <ligand>
        <name>FAD</name>
        <dbReference type="ChEBI" id="CHEBI:57692"/>
    </ligand>
</feature>
<feature type="binding site" evidence="4 5 6 7 8 9 10 11 12 13 14 15 16 17 18 19 20 21 22 23 24">
    <location>
        <position position="135"/>
    </location>
    <ligand>
        <name>FAD</name>
        <dbReference type="ChEBI" id="CHEBI:57692"/>
    </ligand>
</feature>
<feature type="binding site" evidence="4 5 6 7 8 9 10 11 12 13 14 15 16 17 18 19 20 21 22 23 24">
    <location>
        <position position="311"/>
    </location>
    <ligand>
        <name>FAD</name>
        <dbReference type="ChEBI" id="CHEBI:57692"/>
    </ligand>
</feature>
<feature type="binding site" evidence="4 5 6 7 8 9 10 11 12 13 14 15 16 17 18 19 20 21 22 23 24">
    <location>
        <begin position="324"/>
        <end position="325"/>
    </location>
    <ligand>
        <name>FAD</name>
        <dbReference type="ChEBI" id="CHEBI:57692"/>
    </ligand>
</feature>
<feature type="binding site" evidence="7 22 23 24">
    <location>
        <position position="369"/>
    </location>
    <ligand>
        <name>L-kynurenine</name>
        <dbReference type="ChEBI" id="CHEBI:57959"/>
    </ligand>
</feature>
<feature type="binding site" evidence="7 22 23 24">
    <location>
        <position position="404"/>
    </location>
    <ligand>
        <name>L-kynurenine</name>
        <dbReference type="ChEBI" id="CHEBI:57959"/>
    </ligand>
</feature>
<feature type="mutagenesis site" description="Abolishes kynurenine 3-monooxygenase activity." evidence="7">
    <original>R</original>
    <variation>A</variation>
    <location>
        <position position="84"/>
    </location>
</feature>
<feature type="mutagenesis site" description="Abolishes kynurenine 3-monooxygenase activity." evidence="7">
    <original>Y</original>
    <variation>A</variation>
    <variation>F</variation>
    <location>
        <position position="98"/>
    </location>
</feature>
<feature type="mutagenesis site" description="Abolishes NADPH oxidase activity." evidence="8">
    <original>FH</original>
    <variation>AA</variation>
    <location>
        <begin position="319"/>
        <end position="320"/>
    </location>
</feature>
<feature type="mutagenesis site" description="Slightly decreases NADPH oxidase activity." evidence="8">
    <original>H</original>
    <variation>A</variation>
    <location>
        <position position="320"/>
    </location>
</feature>
<feature type="mutagenesis site" description="Decreases kynurenine 3-monooxygenase activity." evidence="7">
    <original>N</original>
    <variation>A</variation>
    <location>
        <position position="369"/>
    </location>
</feature>
<feature type="mutagenesis site" description="Abolishes kynurenine 3-monooxygenase activity." evidence="7">
    <original>N</original>
    <variation>D</variation>
    <location>
        <position position="369"/>
    </location>
</feature>
<feature type="mutagenesis site" description="Strongly decreases kynurenine 3-monooxygenase activity." evidence="7">
    <original>E</original>
    <variation>A</variation>
    <variation>Q</variation>
    <location>
        <position position="372"/>
    </location>
</feature>
<feature type="mutagenesis site" description="Abolishes kynurenine 3-monooxygenase activity." evidence="7">
    <original>M</original>
    <variation>A</variation>
    <location>
        <position position="373"/>
    </location>
</feature>
<feature type="mutagenesis site" description="Decreases kynurenine 3-monooxygenase activity." evidence="7">
    <original>M</original>
    <variation>L</variation>
    <location>
        <position position="373"/>
    </location>
</feature>
<feature type="mutagenesis site" description="Abolishes kynurenine 3-monooxygenase activity." evidence="7">
    <original>Y</original>
    <variation>A</variation>
    <location>
        <position position="404"/>
    </location>
</feature>
<feature type="mutagenesis site" description="Decreases kynurenine 3-monooxygenase activity." evidence="7">
    <original>Y</original>
    <variation>F</variation>
    <location>
        <position position="404"/>
    </location>
</feature>
<feature type="strand" evidence="26">
    <location>
        <begin position="9"/>
        <end position="13"/>
    </location>
</feature>
<feature type="helix" evidence="26">
    <location>
        <begin position="18"/>
        <end position="28"/>
    </location>
</feature>
<feature type="strand" evidence="26">
    <location>
        <begin position="32"/>
        <end position="36"/>
    </location>
</feature>
<feature type="turn" evidence="25">
    <location>
        <begin position="42"/>
        <end position="44"/>
    </location>
</feature>
<feature type="strand" evidence="26">
    <location>
        <begin position="54"/>
        <end position="57"/>
    </location>
</feature>
<feature type="helix" evidence="26">
    <location>
        <begin position="59"/>
        <end position="67"/>
    </location>
</feature>
<feature type="helix" evidence="26">
    <location>
        <begin position="71"/>
        <end position="75"/>
    </location>
</feature>
<feature type="strand" evidence="26">
    <location>
        <begin position="79"/>
        <end position="81"/>
    </location>
</feature>
<feature type="strand" evidence="26">
    <location>
        <begin position="83"/>
        <end position="86"/>
    </location>
</feature>
<feature type="strand" evidence="27">
    <location>
        <begin position="89"/>
        <end position="91"/>
    </location>
</feature>
<feature type="strand" evidence="26">
    <location>
        <begin position="94"/>
        <end position="97"/>
    </location>
</feature>
<feature type="strand" evidence="26">
    <location>
        <begin position="99"/>
        <end position="101"/>
    </location>
</feature>
<feature type="strand" evidence="26">
    <location>
        <begin position="106"/>
        <end position="110"/>
    </location>
</feature>
<feature type="helix" evidence="26">
    <location>
        <begin position="111"/>
        <end position="124"/>
    </location>
</feature>
<feature type="strand" evidence="26">
    <location>
        <begin position="128"/>
        <end position="130"/>
    </location>
</feature>
<feature type="strand" evidence="26">
    <location>
        <begin position="134"/>
        <end position="139"/>
    </location>
</feature>
<feature type="turn" evidence="26">
    <location>
        <begin position="140"/>
        <end position="143"/>
    </location>
</feature>
<feature type="strand" evidence="26">
    <location>
        <begin position="144"/>
        <end position="148"/>
    </location>
</feature>
<feature type="strand" evidence="28">
    <location>
        <begin position="150"/>
        <end position="152"/>
    </location>
</feature>
<feature type="strand" evidence="26">
    <location>
        <begin position="154"/>
        <end position="158"/>
    </location>
</feature>
<feature type="strand" evidence="26">
    <location>
        <begin position="160"/>
        <end position="164"/>
    </location>
</feature>
<feature type="helix" evidence="26">
    <location>
        <begin position="171"/>
        <end position="176"/>
    </location>
</feature>
<feature type="turn" evidence="26">
    <location>
        <begin position="177"/>
        <end position="179"/>
    </location>
</feature>
<feature type="strand" evidence="26">
    <location>
        <begin position="185"/>
        <end position="188"/>
    </location>
</feature>
<feature type="strand" evidence="26">
    <location>
        <begin position="190"/>
        <end position="198"/>
    </location>
</feature>
<feature type="helix" evidence="26">
    <location>
        <begin position="200"/>
        <end position="205"/>
    </location>
</feature>
<feature type="strand" evidence="26">
    <location>
        <begin position="212"/>
        <end position="218"/>
    </location>
</feature>
<feature type="strand" evidence="26">
    <location>
        <begin position="221"/>
        <end position="227"/>
    </location>
</feature>
<feature type="strand" evidence="26">
    <location>
        <begin position="233"/>
        <end position="242"/>
    </location>
</feature>
<feature type="strand" evidence="27">
    <location>
        <begin position="245"/>
        <end position="247"/>
    </location>
</feature>
<feature type="helix" evidence="26">
    <location>
        <begin position="253"/>
        <end position="255"/>
    </location>
</feature>
<feature type="helix" evidence="26">
    <location>
        <begin position="259"/>
        <end position="269"/>
    </location>
</feature>
<feature type="turn" evidence="26">
    <location>
        <begin position="271"/>
        <end position="273"/>
    </location>
</feature>
<feature type="helix" evidence="26">
    <location>
        <begin position="274"/>
        <end position="276"/>
    </location>
</feature>
<feature type="helix" evidence="26">
    <location>
        <begin position="280"/>
        <end position="286"/>
    </location>
</feature>
<feature type="strand" evidence="26">
    <location>
        <begin position="293"/>
        <end position="296"/>
    </location>
</feature>
<feature type="strand" evidence="28">
    <location>
        <begin position="300"/>
        <end position="302"/>
    </location>
</feature>
<feature type="turn" evidence="26">
    <location>
        <begin position="303"/>
        <end position="305"/>
    </location>
</feature>
<feature type="strand" evidence="26">
    <location>
        <begin position="306"/>
        <end position="308"/>
    </location>
</feature>
<feature type="helix" evidence="26">
    <location>
        <begin position="310"/>
        <end position="312"/>
    </location>
</feature>
<feature type="helix" evidence="26">
    <location>
        <begin position="318"/>
        <end position="320"/>
    </location>
</feature>
<feature type="helix" evidence="26">
    <location>
        <begin position="323"/>
        <end position="340"/>
    </location>
</feature>
<feature type="strand" evidence="26">
    <location>
        <begin position="341"/>
        <end position="343"/>
    </location>
</feature>
<feature type="helix" evidence="26">
    <location>
        <begin position="344"/>
        <end position="374"/>
    </location>
</feature>
<feature type="helix" evidence="26">
    <location>
        <begin position="376"/>
        <end position="378"/>
    </location>
</feature>
<feature type="helix" evidence="26">
    <location>
        <begin position="380"/>
        <end position="395"/>
    </location>
</feature>
<feature type="turn" evidence="26">
    <location>
        <begin position="397"/>
        <end position="399"/>
    </location>
</feature>
<feature type="helix" evidence="26">
    <location>
        <begin position="403"/>
        <end position="409"/>
    </location>
</feature>
<feature type="helix" evidence="26">
    <location>
        <begin position="414"/>
        <end position="432"/>
    </location>
</feature>
<feature type="helix" evidence="26">
    <location>
        <begin position="438"/>
        <end position="440"/>
    </location>
</feature>
<feature type="helix" evidence="26">
    <location>
        <begin position="443"/>
        <end position="453"/>
    </location>
</feature>
<reference key="1">
    <citation type="journal article" date="2004" name="Mol. Microbiol.">
        <title>The Pseudomonas siderophore quinolobactin is synthesized from xanthurenic acid, an intermediate of the kynurenine pathway.</title>
        <authorList>
            <person name="Matthijs S."/>
            <person name="Baysse C."/>
            <person name="Koedam N."/>
            <person name="Tehrani K.A."/>
            <person name="Verheyden L."/>
            <person name="Budzikiewicz H."/>
            <person name="Schaefer M."/>
            <person name="Hoorelbeke B."/>
            <person name="Meyer J.-M."/>
            <person name="De Greve H."/>
            <person name="Cornelis P."/>
        </authorList>
    </citation>
    <scope>NUCLEOTIDE SEQUENCE [GENOMIC DNA]</scope>
    <scope>PROBABLE FUNCTION</scope>
    <scope>PATHWAY</scope>
    <source>
        <strain>ATCC 17400</strain>
    </source>
</reference>
<reference key="2">
    <citation type="journal article" date="2007" name="Protein Expr. Purif.">
        <title>Heterologous expression and purification of kynurenine-3-monooxygenase from Pseudomonas fluorescens strain 17400.</title>
        <authorList>
            <person name="Crozier K.R."/>
            <person name="Moran G.R."/>
        </authorList>
    </citation>
    <scope>CATALYTIC ACTIVITY</scope>
    <scope>COFACTOR</scope>
    <scope>BIOPHYSICOCHEMICAL PROPERTIES</scope>
    <source>
        <strain>17400</strain>
    </source>
</reference>
<reference evidence="9" key="3">
    <citation type="journal article" date="2016" name="Nat. Med.">
        <title>Kynurenine-3-monooxygenase inhibition prevents multiple organ failure in rodent models of acute pancreatitis.</title>
        <authorList>
            <person name="Mole D.J."/>
            <person name="Webster S.P."/>
            <person name="Uings I."/>
            <person name="Zheng X."/>
            <person name="Binnie M."/>
            <person name="Wilson K."/>
            <person name="Hutchinson J.P."/>
            <person name="Mirguet O."/>
            <person name="Walker A."/>
            <person name="Beaufils B."/>
            <person name="Ancellin N."/>
            <person name="Trottet L."/>
            <person name="Beneton V."/>
            <person name="Mowat C.G."/>
            <person name="Wilkinson M."/>
            <person name="Rowland P."/>
            <person name="Haslam C."/>
            <person name="McBride A."/>
            <person name="Homer N.Z."/>
            <person name="Baily J.E."/>
            <person name="Sharp M.G."/>
            <person name="Garden O.J."/>
            <person name="Hughes J."/>
            <person name="Howie S.E."/>
            <person name="Holmes D.S."/>
            <person name="Liddle J."/>
            <person name="Iredale J.P."/>
        </authorList>
    </citation>
    <scope>X-RAY CRYSTALLOGRAPHY (3.19 ANGSTROMS) IN COMPLEX WITH FAD AND INHIBITOR</scope>
</reference>
<reference evidence="13" key="4">
    <citation type="journal article" date="2017" name="Bioorg. Med. Chem. Lett.">
        <title>The discovery of potent and selective kynurenine 3-monooxygenase inhibitors for the treatment of acute pancreatitis.</title>
        <authorList>
            <person name="Liddle J."/>
            <person name="Beaufils B."/>
            <person name="Binnie M."/>
            <person name="Bouillot A."/>
            <person name="Denis A.A."/>
            <person name="Hann M.M."/>
            <person name="Haslam C.P."/>
            <person name="Holmes D.S."/>
            <person name="Hutchinson J.P."/>
            <person name="Kranz M."/>
            <person name="McBride A."/>
            <person name="Mirguet O."/>
            <person name="Mole D.J."/>
            <person name="Mowat C.G."/>
            <person name="Pal S."/>
            <person name="Rowland P."/>
            <person name="Trottet L."/>
            <person name="Uings I.J."/>
            <person name="Walker A.L."/>
            <person name="Webster S.P."/>
        </authorList>
    </citation>
    <scope>X-RAY CRYSTALLOGRAPHY (1.81 ANGSTROMS)IN COMPLEX WITH FAD AND INHIBITOR</scope>
</reference>
<reference evidence="10 11 12" key="5">
    <citation type="journal article" date="2017" name="J. Med. Chem.">
        <title>Development of a Series of Kynurenine 3-Monooxygenase Inhibitors Leading to a Clinical Candidate for the Treatment of Acute Pancreatitis.</title>
        <authorList>
            <person name="Walker A.L."/>
            <person name="Ancellin N."/>
            <person name="Beaufils B."/>
            <person name="Bergeal M."/>
            <person name="Binnie M."/>
            <person name="Bouillot A."/>
            <person name="Clapham D."/>
            <person name="Denis A."/>
            <person name="Haslam C.P."/>
            <person name="Holmes D.S."/>
            <person name="Hutchinson J.P."/>
            <person name="Liddle J."/>
            <person name="McBride A."/>
            <person name="Mirguet O."/>
            <person name="Mowat C.G."/>
            <person name="Rowland P."/>
            <person name="Tiberghien N."/>
            <person name="Trottet L."/>
            <person name="Uings I."/>
            <person name="Webster S.P."/>
            <person name="Zheng X."/>
            <person name="Mole D.J."/>
        </authorList>
    </citation>
    <scope>X-RAY CRYSTALLOGRAPHY (1.71 ANGSTROMS) IN COMPLEX WITH FAD AND INHIBITOR</scope>
</reference>
<reference evidence="14 15 16 17 18 19" key="6">
    <citation type="journal article" date="2017" name="Nat. Commun.">
        <title>Structural and mechanistic basis of differentiated inhibitors of the acute pancreatitis target kynurenine-3-monooxygenase.</title>
        <authorList>
            <person name="Hutchinson J.P."/>
            <person name="Rowland P."/>
            <person name="Taylor M.R.D."/>
            <person name="Christodoulou E.M."/>
            <person name="Haslam C."/>
            <person name="Hobbs C.I."/>
            <person name="Holmes D.S."/>
            <person name="Homes P."/>
            <person name="Liddle J."/>
            <person name="Mole D.J."/>
            <person name="Uings I."/>
            <person name="Walker A.L."/>
            <person name="Webster S.P."/>
            <person name="Mowat C.G."/>
            <person name="Chung C.W."/>
        </authorList>
    </citation>
    <scope>X-RAY CRYSTALLOGRAPHY (1.50 ANGSTROMS) IN COMPLEX WITH FAD AND INHIBITORS</scope>
    <scope>COFACTOR</scope>
    <scope>CATALYTIC ACTIVITY</scope>
    <scope>BIOPHYSICOCHEMICAL PROPERTIES</scope>
    <scope>FUNCTION</scope>
</reference>
<reference evidence="20 21" key="7">
    <citation type="journal article" date="2018" name="Cell Chem. Biol.">
        <title>Structural Basis for Inhibitor-Induced Hydrogen Peroxide Production by Kynurenine 3-Monooxygenase.</title>
        <authorList>
            <person name="Kim H.T."/>
            <person name="Na B.K."/>
            <person name="Chung J."/>
            <person name="Kim S."/>
            <person name="Kwon S.K."/>
            <person name="Cha H."/>
            <person name="Son J."/>
            <person name="Cho J.M."/>
            <person name="Hwang K.Y."/>
        </authorList>
    </citation>
    <scope>X-RAY CRYSTALLOGRAPHY (1.78 ANGSTROMS) IN COMPLEX WITH FAD AND INHIBITOR</scope>
    <scope>CATALYTIC ACTIVITY</scope>
    <scope>COFACTOR</scope>
    <scope>MUTAGENESIS OF 319-PHE-HIS-320 AND HIS-320</scope>
</reference>
<reference evidence="22 23 24" key="8">
    <citation type="journal article" date="2018" name="FASEB J.">
        <title>Biochemistry and structural studies of kynurenine 3-monooxygenase reveal allosteric inhibition by Ro 61-8048.</title>
        <authorList>
            <person name="Gao J."/>
            <person name="Yao L."/>
            <person name="Xia T."/>
            <person name="Liao X."/>
            <person name="Zhu D."/>
            <person name="Xiang Y."/>
        </authorList>
    </citation>
    <scope>X-RAY CRYSTALLOGRAPHY (1.60 ANGSTROMS) OF 2-461 IN COMPLEX WITH FAD; L-KYNURENINE AND INHIBITOR</scope>
    <scope>FUNCTION</scope>
    <scope>MUTAGENESIS OF ARG-84; TYR-98; ASN-369; GLU-372; MET-373 AND TYR-404</scope>
    <scope>COFACTOR</scope>
</reference>
<comment type="function">
    <text evidence="6 7">Catalyzes the hydroxylation of L-kynurenine (L-Kyn) to form 3-hydroxy-L-kynurenine (L-3OHKyn). Probably required for the synthesis of quinolinic acid and the siderophore quinolobactin.</text>
</comment>
<comment type="catalytic activity">
    <reaction evidence="1 3 6 8">
        <text>L-kynurenine + NADPH + O2 + H(+) = 3-hydroxy-L-kynurenine + NADP(+) + H2O</text>
        <dbReference type="Rhea" id="RHEA:20545"/>
        <dbReference type="ChEBI" id="CHEBI:15377"/>
        <dbReference type="ChEBI" id="CHEBI:15378"/>
        <dbReference type="ChEBI" id="CHEBI:15379"/>
        <dbReference type="ChEBI" id="CHEBI:57783"/>
        <dbReference type="ChEBI" id="CHEBI:57959"/>
        <dbReference type="ChEBI" id="CHEBI:58125"/>
        <dbReference type="ChEBI" id="CHEBI:58349"/>
        <dbReference type="EC" id="1.14.13.9"/>
    </reaction>
</comment>
<comment type="cofactor">
    <cofactor evidence="1 3 6 8">
        <name>FAD</name>
        <dbReference type="ChEBI" id="CHEBI:57692"/>
    </cofactor>
</comment>
<comment type="biophysicochemical properties">
    <kinetics>
        <KM evidence="3">11.8 uM for L-kynurenine (at 25 degrees Celsius)</KM>
        <KM evidence="6">7 uM for L-kynurenine</KM>
        <KM evidence="3">8.5 uM for NADPH (at 25 degrees Celsius)</KM>
        <KM evidence="3">34.2 uM for oxygen (at 25 degrees Celsius)</KM>
        <text evidence="6">kcat is 2.3 sec(-1) for L-kynurenine.</text>
    </kinetics>
    <phDependence>
        <text evidence="3">Optimum pH is 8.5.</text>
    </phDependence>
</comment>
<comment type="pathway">
    <text evidence="1 2">Cofactor biosynthesis; NAD(+) biosynthesis; quinolinate from L-kynurenine: step 1/3.</text>
</comment>
<comment type="pathway">
    <text evidence="2">Siderophore biosynthesis; quinolobactin biosynthesis.</text>
</comment>
<comment type="similarity">
    <text evidence="1">Belongs to the aromatic-ring hydroxylase family. KMO subfamily.</text>
</comment>
<proteinExistence type="evidence at protein level"/>
<organism>
    <name type="scientific">Pseudomonas fluorescens</name>
    <dbReference type="NCBI Taxonomy" id="294"/>
    <lineage>
        <taxon>Bacteria</taxon>
        <taxon>Pseudomonadati</taxon>
        <taxon>Pseudomonadota</taxon>
        <taxon>Gammaproteobacteria</taxon>
        <taxon>Pseudomonadales</taxon>
        <taxon>Pseudomonadaceae</taxon>
        <taxon>Pseudomonas</taxon>
    </lineage>
</organism>
<dbReference type="EC" id="1.14.13.9" evidence="1"/>
<dbReference type="EMBL" id="AY271621">
    <property type="protein sequence ID" value="AAL65289.1"/>
    <property type="molecule type" value="Genomic_DNA"/>
</dbReference>
<dbReference type="PDB" id="5FN0">
    <property type="method" value="X-ray"/>
    <property type="resolution" value="3.19 A"/>
    <property type="chains" value="A/B/C/D=1-460"/>
</dbReference>
<dbReference type="PDB" id="5MZC">
    <property type="method" value="X-ray"/>
    <property type="resolution" value="1.82 A"/>
    <property type="chains" value="A/B=1-461"/>
</dbReference>
<dbReference type="PDB" id="5MZI">
    <property type="method" value="X-ray"/>
    <property type="resolution" value="1.71 A"/>
    <property type="chains" value="A/B=1-461"/>
</dbReference>
<dbReference type="PDB" id="5MZK">
    <property type="method" value="X-ray"/>
    <property type="resolution" value="1.82 A"/>
    <property type="chains" value="A/B=1-461"/>
</dbReference>
<dbReference type="PDB" id="5N7T">
    <property type="method" value="X-ray"/>
    <property type="resolution" value="1.81 A"/>
    <property type="chains" value="A/B=1-461"/>
</dbReference>
<dbReference type="PDB" id="5NA5">
    <property type="method" value="X-ray"/>
    <property type="resolution" value="1.94 A"/>
    <property type="chains" value="A/B=1-461"/>
</dbReference>
<dbReference type="PDB" id="5NAB">
    <property type="method" value="X-ray"/>
    <property type="resolution" value="1.63 A"/>
    <property type="chains" value="A/B=1-461"/>
</dbReference>
<dbReference type="PDB" id="5NAE">
    <property type="method" value="X-ray"/>
    <property type="resolution" value="1.76 A"/>
    <property type="chains" value="A/B=1-461"/>
</dbReference>
<dbReference type="PDB" id="5NAG">
    <property type="method" value="X-ray"/>
    <property type="resolution" value="1.68 A"/>
    <property type="chains" value="A/B=1-461"/>
</dbReference>
<dbReference type="PDB" id="5NAH">
    <property type="method" value="X-ray"/>
    <property type="resolution" value="1.75 A"/>
    <property type="chains" value="A/B=1-461"/>
</dbReference>
<dbReference type="PDB" id="5NAK">
    <property type="method" value="X-ray"/>
    <property type="resolution" value="1.50 A"/>
    <property type="chains" value="A/B=1-461"/>
</dbReference>
<dbReference type="PDB" id="5X6P">
    <property type="method" value="X-ray"/>
    <property type="resolution" value="1.78 A"/>
    <property type="chains" value="A/B=1-461"/>
</dbReference>
<dbReference type="PDB" id="5X6Q">
    <property type="method" value="X-ray"/>
    <property type="resolution" value="1.90 A"/>
    <property type="chains" value="A=1-461"/>
</dbReference>
<dbReference type="PDB" id="5Y66">
    <property type="method" value="X-ray"/>
    <property type="resolution" value="2.34 A"/>
    <property type="chains" value="A=2-461"/>
</dbReference>
<dbReference type="PDB" id="5Y77">
    <property type="method" value="X-ray"/>
    <property type="resolution" value="1.60 A"/>
    <property type="chains" value="A/B=2-461"/>
</dbReference>
<dbReference type="PDB" id="5Y7A">
    <property type="method" value="X-ray"/>
    <property type="resolution" value="1.85 A"/>
    <property type="chains" value="A=2-461"/>
</dbReference>
<dbReference type="PDB" id="6FOX">
    <property type="method" value="X-ray"/>
    <property type="resolution" value="1.90 A"/>
    <property type="chains" value="A/B=2-460"/>
</dbReference>
<dbReference type="PDB" id="6FOY">
    <property type="method" value="X-ray"/>
    <property type="resolution" value="1.65 A"/>
    <property type="chains" value="A/B=2-460"/>
</dbReference>
<dbReference type="PDB" id="6FOZ">
    <property type="method" value="X-ray"/>
    <property type="resolution" value="2.15 A"/>
    <property type="chains" value="A/B=2-461"/>
</dbReference>
<dbReference type="PDB" id="6FP0">
    <property type="method" value="X-ray"/>
    <property type="resolution" value="2.03 A"/>
    <property type="chains" value="A/B=2-460"/>
</dbReference>
<dbReference type="PDB" id="6FP1">
    <property type="method" value="X-ray"/>
    <property type="resolution" value="1.97 A"/>
    <property type="chains" value="A/B=2-460"/>
</dbReference>
<dbReference type="PDB" id="6FPH">
    <property type="method" value="X-ray"/>
    <property type="resolution" value="2.00 A"/>
    <property type="chains" value="A/B=2-461"/>
</dbReference>
<dbReference type="PDBsum" id="5FN0"/>
<dbReference type="PDBsum" id="5MZC"/>
<dbReference type="PDBsum" id="5MZI"/>
<dbReference type="PDBsum" id="5MZK"/>
<dbReference type="PDBsum" id="5N7T"/>
<dbReference type="PDBsum" id="5NA5"/>
<dbReference type="PDBsum" id="5NAB"/>
<dbReference type="PDBsum" id="5NAE"/>
<dbReference type="PDBsum" id="5NAG"/>
<dbReference type="PDBsum" id="5NAH"/>
<dbReference type="PDBsum" id="5NAK"/>
<dbReference type="PDBsum" id="5X6P"/>
<dbReference type="PDBsum" id="5X6Q"/>
<dbReference type="PDBsum" id="5Y66"/>
<dbReference type="PDBsum" id="5Y77"/>
<dbReference type="PDBsum" id="5Y7A"/>
<dbReference type="PDBsum" id="6FOX"/>
<dbReference type="PDBsum" id="6FOY"/>
<dbReference type="PDBsum" id="6FOZ"/>
<dbReference type="PDBsum" id="6FP0"/>
<dbReference type="PDBsum" id="6FP1"/>
<dbReference type="PDBsum" id="6FPH"/>
<dbReference type="SMR" id="Q84HF5"/>
<dbReference type="BindingDB" id="Q84HF5"/>
<dbReference type="ChEMBL" id="CHEMBL4105840"/>
<dbReference type="BRENDA" id="1.14.13.9">
    <property type="organism ID" value="5121"/>
</dbReference>
<dbReference type="SABIO-RK" id="Q84HF5"/>
<dbReference type="UniPathway" id="UPA00253">
    <property type="reaction ID" value="UER00328"/>
</dbReference>
<dbReference type="UniPathway" id="UPA00981"/>
<dbReference type="GO" id="GO:0071949">
    <property type="term" value="F:FAD binding"/>
    <property type="evidence" value="ECO:0000314"/>
    <property type="project" value="UniProtKB"/>
</dbReference>
<dbReference type="GO" id="GO:0004502">
    <property type="term" value="F:kynurenine 3-monooxygenase activity"/>
    <property type="evidence" value="ECO:0000314"/>
    <property type="project" value="UniProtKB"/>
</dbReference>
<dbReference type="GO" id="GO:0016174">
    <property type="term" value="F:NAD(P)H oxidase H2O2-forming activity"/>
    <property type="evidence" value="ECO:0000314"/>
    <property type="project" value="UniProtKB"/>
</dbReference>
<dbReference type="GO" id="GO:0043420">
    <property type="term" value="P:anthranilate metabolic process"/>
    <property type="evidence" value="ECO:0007669"/>
    <property type="project" value="UniProtKB-UniRule"/>
</dbReference>
<dbReference type="GO" id="GO:0070189">
    <property type="term" value="P:kynurenine metabolic process"/>
    <property type="evidence" value="ECO:0000314"/>
    <property type="project" value="UniProtKB"/>
</dbReference>
<dbReference type="GO" id="GO:0006569">
    <property type="term" value="P:L-tryptophan catabolic process"/>
    <property type="evidence" value="ECO:0007669"/>
    <property type="project" value="UniProtKB-UniRule"/>
</dbReference>
<dbReference type="GO" id="GO:0009435">
    <property type="term" value="P:NAD biosynthetic process"/>
    <property type="evidence" value="ECO:0007669"/>
    <property type="project" value="UniProtKB-UniPathway"/>
</dbReference>
<dbReference type="GO" id="GO:0019674">
    <property type="term" value="P:NAD metabolic process"/>
    <property type="evidence" value="ECO:0000314"/>
    <property type="project" value="UniProtKB"/>
</dbReference>
<dbReference type="GO" id="GO:0019805">
    <property type="term" value="P:quinolinate biosynthetic process"/>
    <property type="evidence" value="ECO:0007669"/>
    <property type="project" value="UniProtKB-UniRule"/>
</dbReference>
<dbReference type="FunFam" id="3.50.50.60:FF:000185">
    <property type="entry name" value="Kynurenine 3-monooxygenase"/>
    <property type="match status" value="1"/>
</dbReference>
<dbReference type="Gene3D" id="3.50.50.60">
    <property type="entry name" value="FAD/NAD(P)-binding domain"/>
    <property type="match status" value="1"/>
</dbReference>
<dbReference type="HAMAP" id="MF_01971">
    <property type="entry name" value="Kynurenine_monooxygenase"/>
    <property type="match status" value="1"/>
</dbReference>
<dbReference type="InterPro" id="IPR002938">
    <property type="entry name" value="FAD-bd"/>
</dbReference>
<dbReference type="InterPro" id="IPR036188">
    <property type="entry name" value="FAD/NAD-bd_sf"/>
</dbReference>
<dbReference type="InterPro" id="IPR027545">
    <property type="entry name" value="Kynurenine_monooxygenase"/>
</dbReference>
<dbReference type="PANTHER" id="PTHR46028">
    <property type="entry name" value="KYNURENINE 3-MONOOXYGENASE"/>
    <property type="match status" value="1"/>
</dbReference>
<dbReference type="PANTHER" id="PTHR46028:SF2">
    <property type="entry name" value="KYNURENINE 3-MONOOXYGENASE"/>
    <property type="match status" value="1"/>
</dbReference>
<dbReference type="Pfam" id="PF01494">
    <property type="entry name" value="FAD_binding_3"/>
    <property type="match status" value="1"/>
</dbReference>
<dbReference type="PRINTS" id="PR00420">
    <property type="entry name" value="RNGMNOXGNASE"/>
</dbReference>
<dbReference type="SUPFAM" id="SSF51905">
    <property type="entry name" value="FAD/NAD(P)-binding domain"/>
    <property type="match status" value="1"/>
</dbReference>
<evidence type="ECO:0000255" key="1">
    <source>
        <dbReference type="HAMAP-Rule" id="MF_01971"/>
    </source>
</evidence>
<evidence type="ECO:0000269" key="2">
    <source>
    </source>
</evidence>
<evidence type="ECO:0000269" key="3">
    <source>
    </source>
</evidence>
<evidence type="ECO:0000269" key="4">
    <source>
    </source>
</evidence>
<evidence type="ECO:0000269" key="5">
    <source>
    </source>
</evidence>
<evidence type="ECO:0000269" key="6">
    <source>
    </source>
</evidence>
<evidence type="ECO:0000269" key="7">
    <source>
    </source>
</evidence>
<evidence type="ECO:0000269" key="8">
    <source>
    </source>
</evidence>
<evidence type="ECO:0007744" key="9">
    <source>
        <dbReference type="PDB" id="5FN0"/>
    </source>
</evidence>
<evidence type="ECO:0007744" key="10">
    <source>
        <dbReference type="PDB" id="5MZC"/>
    </source>
</evidence>
<evidence type="ECO:0007744" key="11">
    <source>
        <dbReference type="PDB" id="5MZI"/>
    </source>
</evidence>
<evidence type="ECO:0007744" key="12">
    <source>
        <dbReference type="PDB" id="5MZK"/>
    </source>
</evidence>
<evidence type="ECO:0007744" key="13">
    <source>
        <dbReference type="PDB" id="5N7T"/>
    </source>
</evidence>
<evidence type="ECO:0007744" key="14">
    <source>
        <dbReference type="PDB" id="5NA5"/>
    </source>
</evidence>
<evidence type="ECO:0007744" key="15">
    <source>
        <dbReference type="PDB" id="5NAB"/>
    </source>
</evidence>
<evidence type="ECO:0007744" key="16">
    <source>
        <dbReference type="PDB" id="5NAE"/>
    </source>
</evidence>
<evidence type="ECO:0007744" key="17">
    <source>
        <dbReference type="PDB" id="5NAG"/>
    </source>
</evidence>
<evidence type="ECO:0007744" key="18">
    <source>
        <dbReference type="PDB" id="5NAH"/>
    </source>
</evidence>
<evidence type="ECO:0007744" key="19">
    <source>
        <dbReference type="PDB" id="5NAK"/>
    </source>
</evidence>
<evidence type="ECO:0007744" key="20">
    <source>
        <dbReference type="PDB" id="5X6P"/>
    </source>
</evidence>
<evidence type="ECO:0007744" key="21">
    <source>
        <dbReference type="PDB" id="5X6Q"/>
    </source>
</evidence>
<evidence type="ECO:0007744" key="22">
    <source>
        <dbReference type="PDB" id="5Y66"/>
    </source>
</evidence>
<evidence type="ECO:0007744" key="23">
    <source>
        <dbReference type="PDB" id="5Y77"/>
    </source>
</evidence>
<evidence type="ECO:0007744" key="24">
    <source>
        <dbReference type="PDB" id="5Y7A"/>
    </source>
</evidence>
<evidence type="ECO:0007829" key="25">
    <source>
        <dbReference type="PDB" id="5FN0"/>
    </source>
</evidence>
<evidence type="ECO:0007829" key="26">
    <source>
        <dbReference type="PDB" id="5NAK"/>
    </source>
</evidence>
<evidence type="ECO:0007829" key="27">
    <source>
        <dbReference type="PDB" id="5X6P"/>
    </source>
</evidence>
<evidence type="ECO:0007829" key="28">
    <source>
        <dbReference type="PDB" id="5Y7A"/>
    </source>
</evidence>
<sequence>MTATDNARQVTIIGAGLAGTLVARLLARNGWQVNLFERRPDPRIETGARGRSINLALAERGAHALRLAGLEREVLAEAVMMRGRMVHVPGTPPNLQPYGRDDSEVIWSINRDRLNRILLDGAEAAGASIHFNLGLDSVDFARQRLTLSNVSGERLEKRFHLLIGADGCNSAVRQAMASVVDLGEHLETQPHGYKELQITPEASAQFNLEPNALHIWPHGDYMCIALPNLDRSFTVTLFLHHQSPAAQPASPCFAQLVDGHAARRFFQRQFPDLSPMLDSLEQDFEHHPTGKLATLRLTTWHVGGQAVLLGDAAHPMVPFHGQGMNCALEDAVALAEHLQSAADNASALAAFTAQRQPDALAIQAMALENYVEMSSKVASPTYLLERELGQIMAQRQPTRFIPRYSMVTFSRLPYAQAMARGQIQEQLLKFAVANHSDLTSINLDAVEHEVTRCLPPLSHLC</sequence>